<protein>
    <recommendedName>
        <fullName>Putative S-adenosyl-L-methionine-dependent methyltransferase MAB_4586c</fullName>
        <ecNumber>2.1.1.-</ecNumber>
    </recommendedName>
</protein>
<gene>
    <name type="ordered locus">MAB_4586c</name>
</gene>
<organism>
    <name type="scientific">Mycobacteroides abscessus (strain ATCC 19977 / DSM 44196 / CCUG 20993 / CIP 104536 / JCM 13569 / NCTC 13031 / TMC 1543 / L948)</name>
    <name type="common">Mycobacterium abscessus</name>
    <dbReference type="NCBI Taxonomy" id="561007"/>
    <lineage>
        <taxon>Bacteria</taxon>
        <taxon>Bacillati</taxon>
        <taxon>Actinomycetota</taxon>
        <taxon>Actinomycetes</taxon>
        <taxon>Mycobacteriales</taxon>
        <taxon>Mycobacteriaceae</taxon>
        <taxon>Mycobacteroides</taxon>
        <taxon>Mycobacteroides abscessus</taxon>
    </lineage>
</organism>
<reference key="1">
    <citation type="journal article" date="2009" name="PLoS ONE">
        <title>Non mycobacterial virulence genes in the genome of the emerging pathogen Mycobacterium abscessus.</title>
        <authorList>
            <person name="Ripoll F."/>
            <person name="Pasek S."/>
            <person name="Schenowitz C."/>
            <person name="Dossat C."/>
            <person name="Barbe V."/>
            <person name="Rottman M."/>
            <person name="Macheras E."/>
            <person name="Heym B."/>
            <person name="Herrmann J.L."/>
            <person name="Daffe M."/>
            <person name="Brosch R."/>
            <person name="Risler J.L."/>
            <person name="Gaillard J.L."/>
        </authorList>
    </citation>
    <scope>NUCLEOTIDE SEQUENCE [LARGE SCALE GENOMIC DNA]</scope>
    <source>
        <strain>ATCC 19977 / DSM 44196 / CCUG 20993 / CIP 104536 / JCM 13569 / NCTC 13031 / TMC 1543 / L948</strain>
    </source>
</reference>
<evidence type="ECO:0000250" key="1"/>
<evidence type="ECO:0000305" key="2"/>
<keyword id="KW-0489">Methyltransferase</keyword>
<keyword id="KW-1185">Reference proteome</keyword>
<keyword id="KW-0949">S-adenosyl-L-methionine</keyword>
<keyword id="KW-0808">Transferase</keyword>
<dbReference type="EC" id="2.1.1.-"/>
<dbReference type="EMBL" id="CU458896">
    <property type="protein sequence ID" value="CAM64655.1"/>
    <property type="molecule type" value="Genomic_DNA"/>
</dbReference>
<dbReference type="RefSeq" id="WP_005089589.1">
    <property type="nucleotide sequence ID" value="NZ_MLCG01000001.1"/>
</dbReference>
<dbReference type="SMR" id="B1ML10"/>
<dbReference type="GeneID" id="93381530"/>
<dbReference type="KEGG" id="mab:MAB_4586c"/>
<dbReference type="Proteomes" id="UP000007137">
    <property type="component" value="Chromosome"/>
</dbReference>
<dbReference type="GO" id="GO:0008168">
    <property type="term" value="F:methyltransferase activity"/>
    <property type="evidence" value="ECO:0007669"/>
    <property type="project" value="UniProtKB-KW"/>
</dbReference>
<dbReference type="GO" id="GO:0032259">
    <property type="term" value="P:methylation"/>
    <property type="evidence" value="ECO:0007669"/>
    <property type="project" value="UniProtKB-KW"/>
</dbReference>
<dbReference type="Gene3D" id="3.40.50.150">
    <property type="entry name" value="Vaccinia Virus protein VP39"/>
    <property type="match status" value="1"/>
</dbReference>
<dbReference type="InterPro" id="IPR007213">
    <property type="entry name" value="Ppm1/Ppm2/Tcmp"/>
</dbReference>
<dbReference type="InterPro" id="IPR029063">
    <property type="entry name" value="SAM-dependent_MTases_sf"/>
</dbReference>
<dbReference type="InterPro" id="IPR011610">
    <property type="entry name" value="SAM_mthyl_Trfase_ML2640-like"/>
</dbReference>
<dbReference type="NCBIfam" id="TIGR00027">
    <property type="entry name" value="mthyl_TIGR00027"/>
    <property type="match status" value="1"/>
</dbReference>
<dbReference type="PANTHER" id="PTHR43619">
    <property type="entry name" value="S-ADENOSYL-L-METHIONINE-DEPENDENT METHYLTRANSFERASE YKTD-RELATED"/>
    <property type="match status" value="1"/>
</dbReference>
<dbReference type="PANTHER" id="PTHR43619:SF2">
    <property type="entry name" value="S-ADENOSYL-L-METHIONINE-DEPENDENT METHYLTRANSFERASES SUPERFAMILY PROTEIN"/>
    <property type="match status" value="1"/>
</dbReference>
<dbReference type="Pfam" id="PF04072">
    <property type="entry name" value="LCM"/>
    <property type="match status" value="1"/>
</dbReference>
<dbReference type="SUPFAM" id="SSF53335">
    <property type="entry name" value="S-adenosyl-L-methionine-dependent methyltransferases"/>
    <property type="match status" value="1"/>
</dbReference>
<proteinExistence type="inferred from homology"/>
<name>Y4586_MYCA9</name>
<sequence length="302" mass="32513">MVRTEGDSWDIVTSVGYTALAVAAGRALDAKLDPPLAHDDHAAAFVAAAGAPQLAAAVATADMTSSAAFNAQWVGVRTRFFDNFFADAAGAGVRQHVILAAGLDSRAYRLPWPAITTVFELDQPKVLQFKDEVLKRSGAQPSARRVTVAVDLRDDWPAALREAGFDATQPTGWILEGLLPYLPGAAQDALFERLNDMSAPGSRVAAELGPEPGELERLAASIKTVVGETSDGETQPNLRDLWFDDPRLDTKTWLGERGWTVTEANLVDAAVAYGRPLRDLPPAFENFLSTKFFTAVQDHPRG</sequence>
<accession>B1ML10</accession>
<feature type="chain" id="PRO_0000361126" description="Putative S-adenosyl-L-methionine-dependent methyltransferase MAB_4586c">
    <location>
        <begin position="1"/>
        <end position="302"/>
    </location>
</feature>
<feature type="binding site" evidence="1">
    <location>
        <position position="122"/>
    </location>
    <ligand>
        <name>S-adenosyl-L-methionine</name>
        <dbReference type="ChEBI" id="CHEBI:59789"/>
    </ligand>
</feature>
<feature type="binding site" evidence="1">
    <location>
        <begin position="151"/>
        <end position="152"/>
    </location>
    <ligand>
        <name>S-adenosyl-L-methionine</name>
        <dbReference type="ChEBI" id="CHEBI:59789"/>
    </ligand>
</feature>
<comment type="function">
    <text evidence="1">Exhibits S-adenosyl-L-methionine-dependent methyltransferase activity.</text>
</comment>
<comment type="similarity">
    <text evidence="2">Belongs to the UPF0677 family.</text>
</comment>